<reference key="1">
    <citation type="journal article" date="2004" name="Nucleic Acids Res.">
        <title>Unique features revealed by the genome sequence of Acinetobacter sp. ADP1, a versatile and naturally transformation competent bacterium.</title>
        <authorList>
            <person name="Barbe V."/>
            <person name="Vallenet D."/>
            <person name="Fonknechten N."/>
            <person name="Kreimeyer A."/>
            <person name="Oztas S."/>
            <person name="Labarre L."/>
            <person name="Cruveiller S."/>
            <person name="Robert C."/>
            <person name="Duprat S."/>
            <person name="Wincker P."/>
            <person name="Ornston L.N."/>
            <person name="Weissenbach J."/>
            <person name="Marliere P."/>
            <person name="Cohen G.N."/>
            <person name="Medigue C."/>
        </authorList>
    </citation>
    <scope>NUCLEOTIDE SEQUENCE [LARGE SCALE GENOMIC DNA]</scope>
    <source>
        <strain>ATCC 33305 / BD413 / ADP1</strain>
    </source>
</reference>
<feature type="chain" id="PRO_0000402645" description="Ureidoacrylate amidohydrolase RutB">
    <location>
        <begin position="1"/>
        <end position="245"/>
    </location>
</feature>
<feature type="active site" description="Proton acceptor" evidence="1">
    <location>
        <position position="38"/>
    </location>
</feature>
<feature type="active site" evidence="1">
    <location>
        <position position="147"/>
    </location>
</feature>
<feature type="active site" description="Nucleophile" evidence="1">
    <location>
        <position position="180"/>
    </location>
</feature>
<dbReference type="EC" id="3.5.1.110" evidence="1"/>
<dbReference type="EMBL" id="CR543861">
    <property type="protein sequence ID" value="CAG67011.1"/>
    <property type="molecule type" value="Genomic_DNA"/>
</dbReference>
<dbReference type="RefSeq" id="WP_004930948.1">
    <property type="nucleotide sequence ID" value="NC_005966.1"/>
</dbReference>
<dbReference type="SMR" id="Q6FFZ6"/>
<dbReference type="STRING" id="202950.GCA_001485005_01776"/>
<dbReference type="GeneID" id="45232562"/>
<dbReference type="KEGG" id="aci:ACIAD0028"/>
<dbReference type="eggNOG" id="COG1335">
    <property type="taxonomic scope" value="Bacteria"/>
</dbReference>
<dbReference type="HOGENOM" id="CLU_068979_8_0_6"/>
<dbReference type="OrthoDB" id="9807387at2"/>
<dbReference type="BioCyc" id="ASP62977:ACIAD_RS00150-MONOMER"/>
<dbReference type="Proteomes" id="UP000000430">
    <property type="component" value="Chromosome"/>
</dbReference>
<dbReference type="GO" id="GO:0016811">
    <property type="term" value="F:hydrolase activity, acting on carbon-nitrogen (but not peptide) bonds, in linear amides"/>
    <property type="evidence" value="ECO:0007669"/>
    <property type="project" value="UniProtKB-UniRule"/>
</dbReference>
<dbReference type="GO" id="GO:0019740">
    <property type="term" value="P:nitrogen utilization"/>
    <property type="evidence" value="ECO:0007669"/>
    <property type="project" value="UniProtKB-UniRule"/>
</dbReference>
<dbReference type="GO" id="GO:0006212">
    <property type="term" value="P:uracil catabolic process"/>
    <property type="evidence" value="ECO:0007669"/>
    <property type="project" value="UniProtKB-UniRule"/>
</dbReference>
<dbReference type="CDD" id="cd00431">
    <property type="entry name" value="cysteine_hydrolases"/>
    <property type="match status" value="1"/>
</dbReference>
<dbReference type="Gene3D" id="3.40.50.850">
    <property type="entry name" value="Isochorismatase-like"/>
    <property type="match status" value="1"/>
</dbReference>
<dbReference type="HAMAP" id="MF_00830">
    <property type="entry name" value="RutB"/>
    <property type="match status" value="1"/>
</dbReference>
<dbReference type="InterPro" id="IPR000868">
    <property type="entry name" value="Isochorismatase-like_dom"/>
</dbReference>
<dbReference type="InterPro" id="IPR050272">
    <property type="entry name" value="Isochorismatase-like_hydrls"/>
</dbReference>
<dbReference type="InterPro" id="IPR036380">
    <property type="entry name" value="Isochorismatase-like_sf"/>
</dbReference>
<dbReference type="InterPro" id="IPR019916">
    <property type="entry name" value="RutB"/>
</dbReference>
<dbReference type="NCBIfam" id="TIGR03614">
    <property type="entry name" value="RutB"/>
    <property type="match status" value="1"/>
</dbReference>
<dbReference type="PANTHER" id="PTHR43540:SF6">
    <property type="entry name" value="ISOCHORISMATASE-LIKE DOMAIN-CONTAINING PROTEIN"/>
    <property type="match status" value="1"/>
</dbReference>
<dbReference type="PANTHER" id="PTHR43540">
    <property type="entry name" value="PEROXYUREIDOACRYLATE/UREIDOACRYLATE AMIDOHYDROLASE-RELATED"/>
    <property type="match status" value="1"/>
</dbReference>
<dbReference type="Pfam" id="PF00857">
    <property type="entry name" value="Isochorismatase"/>
    <property type="match status" value="1"/>
</dbReference>
<dbReference type="SUPFAM" id="SSF52499">
    <property type="entry name" value="Isochorismatase-like hydrolases"/>
    <property type="match status" value="1"/>
</dbReference>
<organism>
    <name type="scientific">Acinetobacter baylyi (strain ATCC 33305 / BD413 / ADP1)</name>
    <dbReference type="NCBI Taxonomy" id="62977"/>
    <lineage>
        <taxon>Bacteria</taxon>
        <taxon>Pseudomonadati</taxon>
        <taxon>Pseudomonadota</taxon>
        <taxon>Gammaproteobacteria</taxon>
        <taxon>Moraxellales</taxon>
        <taxon>Moraxellaceae</taxon>
        <taxon>Acinetobacter</taxon>
    </lineage>
</organism>
<keyword id="KW-0378">Hydrolase</keyword>
<comment type="function">
    <text evidence="1">Hydrolyzes ureidoacrylate to form aminoacrylate and carbamate. The carbamate hydrolyzes spontaneously, thereby releasing one of the nitrogen atoms of the pyrimidine ring as ammonia and one of its carbon atoms as CO2.</text>
</comment>
<comment type="catalytic activity">
    <reaction evidence="1">
        <text>(Z)-3-ureidoacrylate + H2O + H(+) = (Z)-3-aminoacrylate + NH4(+) + CO2</text>
        <dbReference type="Rhea" id="RHEA:42624"/>
        <dbReference type="ChEBI" id="CHEBI:15377"/>
        <dbReference type="ChEBI" id="CHEBI:15378"/>
        <dbReference type="ChEBI" id="CHEBI:16526"/>
        <dbReference type="ChEBI" id="CHEBI:28938"/>
        <dbReference type="ChEBI" id="CHEBI:59891"/>
        <dbReference type="ChEBI" id="CHEBI:59894"/>
        <dbReference type="EC" id="3.5.1.110"/>
    </reaction>
</comment>
<comment type="catalytic activity">
    <reaction evidence="1">
        <text>(Z)-3-ureidoacrylate + H2O = (Z)-3-aminoacrylate + carbamate + H(+)</text>
        <dbReference type="Rhea" id="RHEA:31603"/>
        <dbReference type="ChEBI" id="CHEBI:13941"/>
        <dbReference type="ChEBI" id="CHEBI:15377"/>
        <dbReference type="ChEBI" id="CHEBI:15378"/>
        <dbReference type="ChEBI" id="CHEBI:59891"/>
        <dbReference type="ChEBI" id="CHEBI:59894"/>
    </reaction>
</comment>
<comment type="catalytic activity">
    <reaction evidence="1">
        <text>(Z)-2-methylureidoacrylate + H2O + H(+) = (Z)-2-methylaminoacrylate + NH4(+) + CO2</text>
        <dbReference type="Rhea" id="RHEA:42620"/>
        <dbReference type="ChEBI" id="CHEBI:15377"/>
        <dbReference type="ChEBI" id="CHEBI:15378"/>
        <dbReference type="ChEBI" id="CHEBI:16526"/>
        <dbReference type="ChEBI" id="CHEBI:28938"/>
        <dbReference type="ChEBI" id="CHEBI:143783"/>
        <dbReference type="ChEBI" id="CHEBI:145735"/>
        <dbReference type="EC" id="3.5.1.110"/>
    </reaction>
</comment>
<comment type="similarity">
    <text evidence="1">Belongs to the isochorismatase family. RutB subfamily.</text>
</comment>
<proteinExistence type="inferred from homology"/>
<gene>
    <name evidence="1" type="primary">rutB</name>
    <name type="ordered locus">ACIAD0028</name>
</gene>
<name>RUTB_ACIAD</name>
<evidence type="ECO:0000255" key="1">
    <source>
        <dbReference type="HAMAP-Rule" id="MF_00830"/>
    </source>
</evidence>
<protein>
    <recommendedName>
        <fullName evidence="1">Ureidoacrylate amidohydrolase RutB</fullName>
        <ecNumber evidence="1">3.5.1.110</ecNumber>
    </recommendedName>
</protein>
<sequence length="245" mass="27044">MNTVIADFTERAGTGRVLKAEPEAIQLAPEQTALIVVDMQNAYTSIGGYLDLAGFDVSKTKPVVENIQKAVTAAHAAGIQVIYFKNGWDNQYVEAGGAGSPNFHKSNALKTMRKQPELQGKLLAKGGWDFELIDELQPKSQDIVIEKPRYSGFFNTALDSMLRARGIRNLVFVGIATNVCVESTLRDGFFLEYFGVALDDACYQAGPVEMHRASMYNIKTFFGWVSDTQSFVNTFQHNQQLAKTA</sequence>
<accession>Q6FFZ6</accession>